<keyword id="KW-0963">Cytoplasm</keyword>
<keyword id="KW-0413">Isomerase</keyword>
<keyword id="KW-1185">Reference proteome</keyword>
<protein>
    <recommendedName>
        <fullName evidence="1">Tautomerase PptA</fullName>
        <ecNumber evidence="1">5.3.2.-</ecNumber>
    </recommendedName>
</protein>
<gene>
    <name evidence="1" type="primary">pptA</name>
    <name type="ordered locus">Z2252</name>
    <name type="ordered locus">ECs2064</name>
</gene>
<name>PPTA_ECO57</name>
<accession>Q8X9X8</accession>
<reference key="1">
    <citation type="journal article" date="2001" name="Nature">
        <title>Genome sequence of enterohaemorrhagic Escherichia coli O157:H7.</title>
        <authorList>
            <person name="Perna N.T."/>
            <person name="Plunkett G. III"/>
            <person name="Burland V."/>
            <person name="Mau B."/>
            <person name="Glasner J.D."/>
            <person name="Rose D.J."/>
            <person name="Mayhew G.F."/>
            <person name="Evans P.S."/>
            <person name="Gregor J."/>
            <person name="Kirkpatrick H.A."/>
            <person name="Posfai G."/>
            <person name="Hackett J."/>
            <person name="Klink S."/>
            <person name="Boutin A."/>
            <person name="Shao Y."/>
            <person name="Miller L."/>
            <person name="Grotbeck E.J."/>
            <person name="Davis N.W."/>
            <person name="Lim A."/>
            <person name="Dimalanta E.T."/>
            <person name="Potamousis K."/>
            <person name="Apodaca J."/>
            <person name="Anantharaman T.S."/>
            <person name="Lin J."/>
            <person name="Yen G."/>
            <person name="Schwartz D.C."/>
            <person name="Welch R.A."/>
            <person name="Blattner F.R."/>
        </authorList>
    </citation>
    <scope>NUCLEOTIDE SEQUENCE [LARGE SCALE GENOMIC DNA]</scope>
    <source>
        <strain>O157:H7 / EDL933 / ATCC 700927 / EHEC</strain>
    </source>
</reference>
<reference key="2">
    <citation type="journal article" date="2001" name="DNA Res.">
        <title>Complete genome sequence of enterohemorrhagic Escherichia coli O157:H7 and genomic comparison with a laboratory strain K-12.</title>
        <authorList>
            <person name="Hayashi T."/>
            <person name="Makino K."/>
            <person name="Ohnishi M."/>
            <person name="Kurokawa K."/>
            <person name="Ishii K."/>
            <person name="Yokoyama K."/>
            <person name="Han C.-G."/>
            <person name="Ohtsubo E."/>
            <person name="Nakayama K."/>
            <person name="Murata T."/>
            <person name="Tanaka M."/>
            <person name="Tobe T."/>
            <person name="Iida T."/>
            <person name="Takami H."/>
            <person name="Honda T."/>
            <person name="Sasakawa C."/>
            <person name="Ogasawara N."/>
            <person name="Yasunaga T."/>
            <person name="Kuhara S."/>
            <person name="Shiba T."/>
            <person name="Hattori M."/>
            <person name="Shinagawa H."/>
        </authorList>
    </citation>
    <scope>NUCLEOTIDE SEQUENCE [LARGE SCALE GENOMIC DNA]</scope>
    <source>
        <strain>O157:H7 / Sakai / RIMD 0509952 / EHEC</strain>
    </source>
</reference>
<organism>
    <name type="scientific">Escherichia coli O157:H7</name>
    <dbReference type="NCBI Taxonomy" id="83334"/>
    <lineage>
        <taxon>Bacteria</taxon>
        <taxon>Pseudomonadati</taxon>
        <taxon>Pseudomonadota</taxon>
        <taxon>Gammaproteobacteria</taxon>
        <taxon>Enterobacterales</taxon>
        <taxon>Enterobacteriaceae</taxon>
        <taxon>Escherichia</taxon>
    </lineage>
</organism>
<evidence type="ECO:0000255" key="1">
    <source>
        <dbReference type="HAMAP-Rule" id="MF_00718"/>
    </source>
</evidence>
<evidence type="ECO:0000305" key="2"/>
<comment type="subunit">
    <text evidence="1">Homodimer.</text>
</comment>
<comment type="subcellular location">
    <subcellularLocation>
        <location evidence="1">Cytoplasm</location>
    </subcellularLocation>
</comment>
<comment type="similarity">
    <text evidence="1">Belongs to the 4-oxalocrotonate tautomerase family. PptA subfamily.</text>
</comment>
<comment type="sequence caution" evidence="2">
    <conflict type="erroneous initiation">
        <sequence resource="EMBL-CDS" id="AAG56310"/>
    </conflict>
</comment>
<sequence length="75" mass="8488">MPHIDIKCFPRELDEQQKAALAADITDVIIRHLNSKDSSISIALQQIQPESWQAIWDAEIAPQMEALIKKPGYSM</sequence>
<dbReference type="EC" id="5.3.2.-" evidence="1"/>
<dbReference type="EMBL" id="AE005174">
    <property type="protein sequence ID" value="AAG56310.1"/>
    <property type="status" value="ALT_INIT"/>
    <property type="molecule type" value="Genomic_DNA"/>
</dbReference>
<dbReference type="EMBL" id="BA000007">
    <property type="protein sequence ID" value="BAB35487.1"/>
    <property type="molecule type" value="Genomic_DNA"/>
</dbReference>
<dbReference type="PIR" id="B85731">
    <property type="entry name" value="B85731"/>
</dbReference>
<dbReference type="PIR" id="H90886">
    <property type="entry name" value="H90886"/>
</dbReference>
<dbReference type="RefSeq" id="NP_310091.1">
    <property type="nucleotide sequence ID" value="NC_002695.1"/>
</dbReference>
<dbReference type="RefSeq" id="WP_001120141.1">
    <property type="nucleotide sequence ID" value="NZ_VOAI01000034.1"/>
</dbReference>
<dbReference type="SMR" id="Q8X9X8"/>
<dbReference type="STRING" id="155864.Z2252"/>
<dbReference type="GeneID" id="75203165"/>
<dbReference type="GeneID" id="917264"/>
<dbReference type="KEGG" id="ece:Z2252"/>
<dbReference type="KEGG" id="ecs:ECs_2064"/>
<dbReference type="PATRIC" id="fig|386585.9.peg.2167"/>
<dbReference type="eggNOG" id="COG1942">
    <property type="taxonomic scope" value="Bacteria"/>
</dbReference>
<dbReference type="HOGENOM" id="CLU_183611_0_1_6"/>
<dbReference type="OMA" id="IKCFPRD"/>
<dbReference type="Proteomes" id="UP000000558">
    <property type="component" value="Chromosome"/>
</dbReference>
<dbReference type="Proteomes" id="UP000002519">
    <property type="component" value="Chromosome"/>
</dbReference>
<dbReference type="GO" id="GO:0005737">
    <property type="term" value="C:cytoplasm"/>
    <property type="evidence" value="ECO:0007669"/>
    <property type="project" value="UniProtKB-SubCell"/>
</dbReference>
<dbReference type="GO" id="GO:0016862">
    <property type="term" value="F:intramolecular oxidoreductase activity, interconverting keto- and enol-groups"/>
    <property type="evidence" value="ECO:0007669"/>
    <property type="project" value="UniProtKB-UniRule"/>
</dbReference>
<dbReference type="Gene3D" id="3.30.429.10">
    <property type="entry name" value="Macrophage Migration Inhibitory Factor"/>
    <property type="match status" value="1"/>
</dbReference>
<dbReference type="HAMAP" id="MF_00718">
    <property type="entry name" value="Tautomerase_PptA"/>
    <property type="match status" value="1"/>
</dbReference>
<dbReference type="InterPro" id="IPR004370">
    <property type="entry name" value="4-OT-like_dom"/>
</dbReference>
<dbReference type="InterPro" id="IPR014347">
    <property type="entry name" value="Tautomerase/MIF_sf"/>
</dbReference>
<dbReference type="InterPro" id="IPR017284">
    <property type="entry name" value="Tautomerase_PptA"/>
</dbReference>
<dbReference type="NCBIfam" id="NF002324">
    <property type="entry name" value="PRK01271.1"/>
    <property type="match status" value="1"/>
</dbReference>
<dbReference type="Pfam" id="PF01361">
    <property type="entry name" value="Tautomerase"/>
    <property type="match status" value="1"/>
</dbReference>
<dbReference type="PIRSF" id="PIRSF037799">
    <property type="entry name" value="Tautomer_YdcE_prd"/>
    <property type="match status" value="1"/>
</dbReference>
<dbReference type="SUPFAM" id="SSF55331">
    <property type="entry name" value="Tautomerase/MIF"/>
    <property type="match status" value="1"/>
</dbReference>
<feature type="initiator methionine" description="Removed" evidence="1">
    <location>
        <position position="1"/>
    </location>
</feature>
<feature type="chain" id="PRO_0000209527" description="Tautomerase PptA">
    <location>
        <begin position="2"/>
        <end position="75"/>
    </location>
</feature>
<feature type="active site" description="Proton acceptor; via imino nitrogen" evidence="1">
    <location>
        <position position="2"/>
    </location>
</feature>
<proteinExistence type="inferred from homology"/>